<organism>
    <name type="scientific">Shewanella piezotolerans (strain WP3 / JCM 13877)</name>
    <dbReference type="NCBI Taxonomy" id="225849"/>
    <lineage>
        <taxon>Bacteria</taxon>
        <taxon>Pseudomonadati</taxon>
        <taxon>Pseudomonadota</taxon>
        <taxon>Gammaproteobacteria</taxon>
        <taxon>Alteromonadales</taxon>
        <taxon>Shewanellaceae</taxon>
        <taxon>Shewanella</taxon>
    </lineage>
</organism>
<sequence>MEVLAKHRFARTSPQKCRLVADQIRGLPVAKALEILTFSPKKAAVLVKKVLDSAIANAEHNEGADIDELRVGAIMIDEGPTMKRIMPRAKGRADRIIKRTSHITVVVSDR</sequence>
<evidence type="ECO:0000255" key="1">
    <source>
        <dbReference type="HAMAP-Rule" id="MF_01331"/>
    </source>
</evidence>
<evidence type="ECO:0000305" key="2"/>
<gene>
    <name evidence="1" type="primary">rplV</name>
    <name type="ordered locus">swp_2016</name>
</gene>
<keyword id="KW-0687">Ribonucleoprotein</keyword>
<keyword id="KW-0689">Ribosomal protein</keyword>
<keyword id="KW-0694">RNA-binding</keyword>
<keyword id="KW-0699">rRNA-binding</keyword>
<name>RL22_SHEPW</name>
<comment type="function">
    <text evidence="1">This protein binds specifically to 23S rRNA; its binding is stimulated by other ribosomal proteins, e.g. L4, L17, and L20. It is important during the early stages of 50S assembly. It makes multiple contacts with different domains of the 23S rRNA in the assembled 50S subunit and ribosome (By similarity).</text>
</comment>
<comment type="function">
    <text evidence="1">The globular domain of the protein is located near the polypeptide exit tunnel on the outside of the subunit, while an extended beta-hairpin is found that lines the wall of the exit tunnel in the center of the 70S ribosome.</text>
</comment>
<comment type="subunit">
    <text evidence="1">Part of the 50S ribosomal subunit.</text>
</comment>
<comment type="similarity">
    <text evidence="1">Belongs to the universal ribosomal protein uL22 family.</text>
</comment>
<accession>B8CND8</accession>
<reference key="1">
    <citation type="journal article" date="2008" name="PLoS ONE">
        <title>Environmental adaptation: genomic analysis of the piezotolerant and psychrotolerant deep-sea iron reducing bacterium Shewanella piezotolerans WP3.</title>
        <authorList>
            <person name="Wang F."/>
            <person name="Wang J."/>
            <person name="Jian H."/>
            <person name="Zhang B."/>
            <person name="Li S."/>
            <person name="Wang F."/>
            <person name="Zeng X."/>
            <person name="Gao L."/>
            <person name="Bartlett D.H."/>
            <person name="Yu J."/>
            <person name="Hu S."/>
            <person name="Xiao X."/>
        </authorList>
    </citation>
    <scope>NUCLEOTIDE SEQUENCE [LARGE SCALE GENOMIC DNA]</scope>
    <source>
        <strain>WP3 / JCM 13877</strain>
    </source>
</reference>
<feature type="chain" id="PRO_1000142309" description="Large ribosomal subunit protein uL22">
    <location>
        <begin position="1"/>
        <end position="110"/>
    </location>
</feature>
<protein>
    <recommendedName>
        <fullName evidence="1">Large ribosomal subunit protein uL22</fullName>
    </recommendedName>
    <alternativeName>
        <fullName evidence="2">50S ribosomal protein L22</fullName>
    </alternativeName>
</protein>
<proteinExistence type="inferred from homology"/>
<dbReference type="EMBL" id="CP000472">
    <property type="protein sequence ID" value="ACJ28772.1"/>
    <property type="molecule type" value="Genomic_DNA"/>
</dbReference>
<dbReference type="RefSeq" id="WP_012144645.1">
    <property type="nucleotide sequence ID" value="NC_011566.1"/>
</dbReference>
<dbReference type="SMR" id="B8CND8"/>
<dbReference type="STRING" id="225849.swp_2016"/>
<dbReference type="KEGG" id="swp:swp_2016"/>
<dbReference type="eggNOG" id="COG0091">
    <property type="taxonomic scope" value="Bacteria"/>
</dbReference>
<dbReference type="HOGENOM" id="CLU_083987_3_3_6"/>
<dbReference type="OrthoDB" id="9805969at2"/>
<dbReference type="Proteomes" id="UP000000753">
    <property type="component" value="Chromosome"/>
</dbReference>
<dbReference type="GO" id="GO:0022625">
    <property type="term" value="C:cytosolic large ribosomal subunit"/>
    <property type="evidence" value="ECO:0007669"/>
    <property type="project" value="TreeGrafter"/>
</dbReference>
<dbReference type="GO" id="GO:0019843">
    <property type="term" value="F:rRNA binding"/>
    <property type="evidence" value="ECO:0007669"/>
    <property type="project" value="UniProtKB-UniRule"/>
</dbReference>
<dbReference type="GO" id="GO:0003735">
    <property type="term" value="F:structural constituent of ribosome"/>
    <property type="evidence" value="ECO:0007669"/>
    <property type="project" value="InterPro"/>
</dbReference>
<dbReference type="GO" id="GO:0006412">
    <property type="term" value="P:translation"/>
    <property type="evidence" value="ECO:0007669"/>
    <property type="project" value="UniProtKB-UniRule"/>
</dbReference>
<dbReference type="CDD" id="cd00336">
    <property type="entry name" value="Ribosomal_L22"/>
    <property type="match status" value="1"/>
</dbReference>
<dbReference type="FunFam" id="3.90.470.10:FF:000001">
    <property type="entry name" value="50S ribosomal protein L22"/>
    <property type="match status" value="1"/>
</dbReference>
<dbReference type="Gene3D" id="3.90.470.10">
    <property type="entry name" value="Ribosomal protein L22/L17"/>
    <property type="match status" value="1"/>
</dbReference>
<dbReference type="HAMAP" id="MF_01331_B">
    <property type="entry name" value="Ribosomal_uL22_B"/>
    <property type="match status" value="1"/>
</dbReference>
<dbReference type="InterPro" id="IPR001063">
    <property type="entry name" value="Ribosomal_uL22"/>
</dbReference>
<dbReference type="InterPro" id="IPR005727">
    <property type="entry name" value="Ribosomal_uL22_bac/chlpt-type"/>
</dbReference>
<dbReference type="InterPro" id="IPR047867">
    <property type="entry name" value="Ribosomal_uL22_bac/org-type"/>
</dbReference>
<dbReference type="InterPro" id="IPR018260">
    <property type="entry name" value="Ribosomal_uL22_CS"/>
</dbReference>
<dbReference type="InterPro" id="IPR036394">
    <property type="entry name" value="Ribosomal_uL22_sf"/>
</dbReference>
<dbReference type="NCBIfam" id="TIGR01044">
    <property type="entry name" value="rplV_bact"/>
    <property type="match status" value="1"/>
</dbReference>
<dbReference type="PANTHER" id="PTHR13501">
    <property type="entry name" value="CHLOROPLAST 50S RIBOSOMAL PROTEIN L22-RELATED"/>
    <property type="match status" value="1"/>
</dbReference>
<dbReference type="PANTHER" id="PTHR13501:SF8">
    <property type="entry name" value="LARGE RIBOSOMAL SUBUNIT PROTEIN UL22M"/>
    <property type="match status" value="1"/>
</dbReference>
<dbReference type="Pfam" id="PF00237">
    <property type="entry name" value="Ribosomal_L22"/>
    <property type="match status" value="1"/>
</dbReference>
<dbReference type="SUPFAM" id="SSF54843">
    <property type="entry name" value="Ribosomal protein L22"/>
    <property type="match status" value="1"/>
</dbReference>
<dbReference type="PROSITE" id="PS00464">
    <property type="entry name" value="RIBOSOMAL_L22"/>
    <property type="match status" value="1"/>
</dbReference>